<proteinExistence type="inferred from homology"/>
<dbReference type="EMBL" id="AM398681">
    <property type="protein sequence ID" value="CAL43510.1"/>
    <property type="molecule type" value="Genomic_DNA"/>
</dbReference>
<dbReference type="RefSeq" id="WP_011963555.1">
    <property type="nucleotide sequence ID" value="NC_009613.3"/>
</dbReference>
<dbReference type="RefSeq" id="YP_001296319.1">
    <property type="nucleotide sequence ID" value="NC_009613.3"/>
</dbReference>
<dbReference type="SMR" id="A6GZI7"/>
<dbReference type="STRING" id="402612.FP1434"/>
<dbReference type="EnsemblBacteria" id="CAL43510">
    <property type="protein sequence ID" value="CAL43510"/>
    <property type="gene ID" value="FP1434"/>
</dbReference>
<dbReference type="KEGG" id="fps:FP1434"/>
<dbReference type="PATRIC" id="fig|402612.5.peg.1449"/>
<dbReference type="eggNOG" id="COG1058">
    <property type="taxonomic scope" value="Bacteria"/>
</dbReference>
<dbReference type="eggNOG" id="COG1546">
    <property type="taxonomic scope" value="Bacteria"/>
</dbReference>
<dbReference type="HOGENOM" id="CLU_030805_9_2_10"/>
<dbReference type="OrthoDB" id="9801454at2"/>
<dbReference type="Proteomes" id="UP000006394">
    <property type="component" value="Chromosome"/>
</dbReference>
<dbReference type="CDD" id="cd00885">
    <property type="entry name" value="cinA"/>
    <property type="match status" value="1"/>
</dbReference>
<dbReference type="Gene3D" id="3.90.950.20">
    <property type="entry name" value="CinA-like"/>
    <property type="match status" value="1"/>
</dbReference>
<dbReference type="Gene3D" id="3.40.980.10">
    <property type="entry name" value="MoaB/Mog-like domain"/>
    <property type="match status" value="1"/>
</dbReference>
<dbReference type="HAMAP" id="MF_00226_B">
    <property type="entry name" value="CinA_B"/>
    <property type="match status" value="1"/>
</dbReference>
<dbReference type="InterPro" id="IPR050101">
    <property type="entry name" value="CinA"/>
</dbReference>
<dbReference type="InterPro" id="IPR036653">
    <property type="entry name" value="CinA-like_C"/>
</dbReference>
<dbReference type="InterPro" id="IPR008136">
    <property type="entry name" value="CinA_C"/>
</dbReference>
<dbReference type="InterPro" id="IPR041424">
    <property type="entry name" value="CinA_KH"/>
</dbReference>
<dbReference type="InterPro" id="IPR008135">
    <property type="entry name" value="Competence-induced_CinA"/>
</dbReference>
<dbReference type="InterPro" id="IPR036425">
    <property type="entry name" value="MoaB/Mog-like_dom_sf"/>
</dbReference>
<dbReference type="InterPro" id="IPR001453">
    <property type="entry name" value="MoaB/Mog_dom"/>
</dbReference>
<dbReference type="NCBIfam" id="TIGR00200">
    <property type="entry name" value="cinA_nterm"/>
    <property type="match status" value="1"/>
</dbReference>
<dbReference type="NCBIfam" id="TIGR00177">
    <property type="entry name" value="molyb_syn"/>
    <property type="match status" value="1"/>
</dbReference>
<dbReference type="NCBIfam" id="TIGR00199">
    <property type="entry name" value="PncC_domain"/>
    <property type="match status" value="1"/>
</dbReference>
<dbReference type="NCBIfam" id="NF001813">
    <property type="entry name" value="PRK00549.1"/>
    <property type="match status" value="1"/>
</dbReference>
<dbReference type="PANTHER" id="PTHR13939">
    <property type="entry name" value="NICOTINAMIDE-NUCLEOTIDE AMIDOHYDROLASE PNCC"/>
    <property type="match status" value="1"/>
</dbReference>
<dbReference type="PANTHER" id="PTHR13939:SF0">
    <property type="entry name" value="NMN AMIDOHYDROLASE-LIKE PROTEIN YFAY"/>
    <property type="match status" value="1"/>
</dbReference>
<dbReference type="Pfam" id="PF02464">
    <property type="entry name" value="CinA"/>
    <property type="match status" value="1"/>
</dbReference>
<dbReference type="Pfam" id="PF18146">
    <property type="entry name" value="CinA_KH"/>
    <property type="match status" value="1"/>
</dbReference>
<dbReference type="Pfam" id="PF00994">
    <property type="entry name" value="MoCF_biosynth"/>
    <property type="match status" value="1"/>
</dbReference>
<dbReference type="PIRSF" id="PIRSF006728">
    <property type="entry name" value="CinA"/>
    <property type="match status" value="1"/>
</dbReference>
<dbReference type="SMART" id="SM00852">
    <property type="entry name" value="MoCF_biosynth"/>
    <property type="match status" value="1"/>
</dbReference>
<dbReference type="SUPFAM" id="SSF142433">
    <property type="entry name" value="CinA-like"/>
    <property type="match status" value="1"/>
</dbReference>
<dbReference type="SUPFAM" id="SSF53218">
    <property type="entry name" value="Molybdenum cofactor biosynthesis proteins"/>
    <property type="match status" value="1"/>
</dbReference>
<comment type="similarity">
    <text evidence="1">Belongs to the CinA family.</text>
</comment>
<evidence type="ECO:0000255" key="1">
    <source>
        <dbReference type="HAMAP-Rule" id="MF_00226"/>
    </source>
</evidence>
<keyword id="KW-1185">Reference proteome</keyword>
<name>CINAL_FLAPJ</name>
<protein>
    <recommendedName>
        <fullName evidence="1">CinA-like protein</fullName>
    </recommendedName>
</protein>
<reference key="1">
    <citation type="journal article" date="2007" name="Nat. Biotechnol.">
        <title>Complete genome sequence of the fish pathogen Flavobacterium psychrophilum.</title>
        <authorList>
            <person name="Duchaud E."/>
            <person name="Boussaha M."/>
            <person name="Loux V."/>
            <person name="Bernardet J.-F."/>
            <person name="Michel C."/>
            <person name="Kerouault B."/>
            <person name="Mondot S."/>
            <person name="Nicolas P."/>
            <person name="Bossy R."/>
            <person name="Caron C."/>
            <person name="Bessieres P."/>
            <person name="Gibrat J.-F."/>
            <person name="Claverol S."/>
            <person name="Dumetz F."/>
            <person name="Le Henaff M."/>
            <person name="Benmansour A."/>
        </authorList>
    </citation>
    <scope>NUCLEOTIDE SEQUENCE [LARGE SCALE GENOMIC DNA]</scope>
    <source>
        <strain>ATCC 49511 / DSM 21280 / CIP 103535 / JIP02/86</strain>
    </source>
</reference>
<accession>A6GZI7</accession>
<sequence>MKATIVTVGDEILIGQIIDTNSSFIAKSLDKIGIGVHEMLSITDDKQHILQTLSLLQNKVDVVIITGGLGPTKDDITKKTLCEYFNDKLIINEKVLVHVTQLIEDYFKRPITQVNKDQALVPSKCEVLFNQVGTAPGMWLQKENTVFISLPGVPYEMKYLIENEVIPKLIAKYDRPFIIHKTILTYGVGESLLAERIETWEDNLPKFIKLAYLPSPGRVRLRLSARGVDENVLKNEISLQVQKLQLIISDCIVGFEEDETLEVVLGKLLTEKKLTISTAESCTGGKIASTITSVSGSSNYFKGSIVSYATEAKVAVLGISQEKINKFSVVSTQVAEEMATQVQKKFKTNFAIATTGNAGPNKGDANAEVGTVFIAIATPKGVFSEKFNFGQPREKVIDRALNQALEMIYKEILKNYSK</sequence>
<organism>
    <name type="scientific">Flavobacterium psychrophilum (strain ATCC 49511 / DSM 21280 / CIP 103535 / JIP02/86)</name>
    <dbReference type="NCBI Taxonomy" id="402612"/>
    <lineage>
        <taxon>Bacteria</taxon>
        <taxon>Pseudomonadati</taxon>
        <taxon>Bacteroidota</taxon>
        <taxon>Flavobacteriia</taxon>
        <taxon>Flavobacteriales</taxon>
        <taxon>Flavobacteriaceae</taxon>
        <taxon>Flavobacterium</taxon>
    </lineage>
</organism>
<gene>
    <name type="ordered locus">FP1434</name>
</gene>
<feature type="chain" id="PRO_1000078177" description="CinA-like protein">
    <location>
        <begin position="1"/>
        <end position="418"/>
    </location>
</feature>